<name>VATC_DEIRA</name>
<protein>
    <recommendedName>
        <fullName>V-type ATP synthase subunit C</fullName>
    </recommendedName>
    <alternativeName>
        <fullName>V-ATPase subunit C</fullName>
    </alternativeName>
</protein>
<comment type="function">
    <text evidence="1">Produces ATP from ADP in the presence of a proton gradient across the membrane.</text>
</comment>
<comment type="similarity">
    <text evidence="2">Belongs to the V-ATPase V0D/AC39 subunit family.</text>
</comment>
<organism>
    <name type="scientific">Deinococcus radiodurans (strain ATCC 13939 / DSM 20539 / JCM 16871 / CCUG 27074 / LMG 4051 / NBRC 15346 / NCIMB 9279 / VKM B-1422 / R1)</name>
    <dbReference type="NCBI Taxonomy" id="243230"/>
    <lineage>
        <taxon>Bacteria</taxon>
        <taxon>Thermotogati</taxon>
        <taxon>Deinococcota</taxon>
        <taxon>Deinococci</taxon>
        <taxon>Deinococcales</taxon>
        <taxon>Deinococcaceae</taxon>
        <taxon>Deinococcus</taxon>
    </lineage>
</organism>
<gene>
    <name type="primary">atpC</name>
    <name type="ordered locus">DR_0698</name>
</gene>
<accession>Q9RWH0</accession>
<reference key="1">
    <citation type="journal article" date="1999" name="Science">
        <title>Genome sequence of the radioresistant bacterium Deinococcus radiodurans R1.</title>
        <authorList>
            <person name="White O."/>
            <person name="Eisen J.A."/>
            <person name="Heidelberg J.F."/>
            <person name="Hickey E.K."/>
            <person name="Peterson J.D."/>
            <person name="Dodson R.J."/>
            <person name="Haft D.H."/>
            <person name="Gwinn M.L."/>
            <person name="Nelson W.C."/>
            <person name="Richardson D.L."/>
            <person name="Moffat K.S."/>
            <person name="Qin H."/>
            <person name="Jiang L."/>
            <person name="Pamphile W."/>
            <person name="Crosby M."/>
            <person name="Shen M."/>
            <person name="Vamathevan J.J."/>
            <person name="Lam P."/>
            <person name="McDonald L.A."/>
            <person name="Utterback T.R."/>
            <person name="Zalewski C."/>
            <person name="Makarova K.S."/>
            <person name="Aravind L."/>
            <person name="Daly M.J."/>
            <person name="Minton K.W."/>
            <person name="Fleischmann R.D."/>
            <person name="Ketchum K.A."/>
            <person name="Nelson K.E."/>
            <person name="Salzberg S.L."/>
            <person name="Smith H.O."/>
            <person name="Venter J.C."/>
            <person name="Fraser C.M."/>
        </authorList>
    </citation>
    <scope>NUCLEOTIDE SEQUENCE [LARGE SCALE GENOMIC DNA]</scope>
    <source>
        <strain>ATCC 13939 / DSM 20539 / JCM 16871 / CCUG 27074 / LMG 4051 / NBRC 15346 / NCIMB 9279 / VKM B-1422 / R1</strain>
    </source>
</reference>
<proteinExistence type="inferred from homology"/>
<dbReference type="EMBL" id="AE000513">
    <property type="protein sequence ID" value="AAF10276.1"/>
    <property type="molecule type" value="Genomic_DNA"/>
</dbReference>
<dbReference type="PIR" id="G75487">
    <property type="entry name" value="G75487"/>
</dbReference>
<dbReference type="RefSeq" id="NP_294421.1">
    <property type="nucleotide sequence ID" value="NC_001263.1"/>
</dbReference>
<dbReference type="SMR" id="Q9RWH0"/>
<dbReference type="STRING" id="243230.DR_0698"/>
<dbReference type="PaxDb" id="243230-DR_0698"/>
<dbReference type="EnsemblBacteria" id="AAF10276">
    <property type="protein sequence ID" value="AAF10276"/>
    <property type="gene ID" value="DR_0698"/>
</dbReference>
<dbReference type="KEGG" id="dra:DR_0698"/>
<dbReference type="PATRIC" id="fig|243230.17.peg.876"/>
<dbReference type="eggNOG" id="COG1527">
    <property type="taxonomic scope" value="Bacteria"/>
</dbReference>
<dbReference type="HOGENOM" id="CLU_073549_0_0_0"/>
<dbReference type="InParanoid" id="Q9RWH0"/>
<dbReference type="OrthoDB" id="73785at2"/>
<dbReference type="Proteomes" id="UP000002524">
    <property type="component" value="Chromosome 1"/>
</dbReference>
<dbReference type="GO" id="GO:0033179">
    <property type="term" value="C:proton-transporting V-type ATPase, V0 domain"/>
    <property type="evidence" value="ECO:0007669"/>
    <property type="project" value="InterPro"/>
</dbReference>
<dbReference type="GO" id="GO:0005524">
    <property type="term" value="F:ATP binding"/>
    <property type="evidence" value="ECO:0007669"/>
    <property type="project" value="UniProtKB-UniRule"/>
</dbReference>
<dbReference type="GO" id="GO:0046933">
    <property type="term" value="F:proton-transporting ATP synthase activity, rotational mechanism"/>
    <property type="evidence" value="ECO:0007669"/>
    <property type="project" value="UniProtKB-UniRule"/>
</dbReference>
<dbReference type="GO" id="GO:0046961">
    <property type="term" value="F:proton-transporting ATPase activity, rotational mechanism"/>
    <property type="evidence" value="ECO:0007669"/>
    <property type="project" value="InterPro"/>
</dbReference>
<dbReference type="GO" id="GO:0042777">
    <property type="term" value="P:proton motive force-driven plasma membrane ATP synthesis"/>
    <property type="evidence" value="ECO:0007669"/>
    <property type="project" value="UniProtKB-UniRule"/>
</dbReference>
<dbReference type="Gene3D" id="1.10.132.50">
    <property type="entry name" value="ATP synthase (C/AC39) subunit, domain 3"/>
    <property type="match status" value="1"/>
</dbReference>
<dbReference type="Gene3D" id="1.20.1690.10">
    <property type="entry name" value="V-type ATP synthase subunit C domain"/>
    <property type="match status" value="2"/>
</dbReference>
<dbReference type="HAMAP" id="MF_00314">
    <property type="entry name" value="ATP_synth_C_arch"/>
    <property type="match status" value="1"/>
</dbReference>
<dbReference type="InterPro" id="IPR036079">
    <property type="entry name" value="ATPase_csu/dsu_sf"/>
</dbReference>
<dbReference type="InterPro" id="IPR014272">
    <property type="entry name" value="ATPase_V0-cplx_csu"/>
</dbReference>
<dbReference type="InterPro" id="IPR002843">
    <property type="entry name" value="ATPase_V0-cplx_csu/dsu"/>
</dbReference>
<dbReference type="InterPro" id="IPR050873">
    <property type="entry name" value="V-ATPase_V0D/AC39_subunit"/>
</dbReference>
<dbReference type="InterPro" id="IPR035067">
    <property type="entry name" value="V-type_ATPase_csu/dsu"/>
</dbReference>
<dbReference type="InterPro" id="IPR044911">
    <property type="entry name" value="V-type_ATPase_csu/dsu_dom_3"/>
</dbReference>
<dbReference type="PANTHER" id="PTHR38682">
    <property type="entry name" value="V-TYPE ATP SYNTHASE SUBUNIT C"/>
    <property type="match status" value="1"/>
</dbReference>
<dbReference type="PANTHER" id="PTHR38682:SF1">
    <property type="entry name" value="V-TYPE ATP SYNTHASE SUBUNIT C"/>
    <property type="match status" value="1"/>
</dbReference>
<dbReference type="Pfam" id="PF01992">
    <property type="entry name" value="vATP-synt_AC39"/>
    <property type="match status" value="1"/>
</dbReference>
<dbReference type="SUPFAM" id="SSF103486">
    <property type="entry name" value="V-type ATP synthase subunit C"/>
    <property type="match status" value="1"/>
</dbReference>
<feature type="chain" id="PRO_0000119375" description="V-type ATP synthase subunit C">
    <location>
        <begin position="1"/>
        <end position="352"/>
    </location>
</feature>
<keyword id="KW-0066">ATP synthesis</keyword>
<keyword id="KW-0375">Hydrogen ion transport</keyword>
<keyword id="KW-0406">Ion transport</keyword>
<keyword id="KW-1185">Reference proteome</keyword>
<keyword id="KW-0813">Transport</keyword>
<sequence>MGDSSGSRPTWPRRSAACSRNKVGKDCMPDDYSYINTRVRVMRTKLLDGRALDAALASGSYQEFLRVLSETDFAPNMRETTAEGAGLPELDRALSQNLFDTTQRVLGFADGDAKREIETLLMKWDLTNLKTLARGIVSGRGAETIQQNLIPGGTIKPSVLQTASQSTDLASAATALGVGGHPLAKVFRNAVTAYNTTGRLLDLEVLLDQGYYRYATQVSRDTSLRRYLSREIDITNALIARNSRGGTLDTNLFVPGGSLDAAGYGRLGAGDAGGNADITAILEAPSIEDAEVAARTALDRAARSSAVSDVEGVGIILDFLRRKEIEVAKLRLIGRGKYYDLPTDEIRREVQA</sequence>
<evidence type="ECO:0000250" key="1"/>
<evidence type="ECO:0000305" key="2"/>